<feature type="chain" id="PRO_0000062973" description="Chaperone protein HtpG">
    <location>
        <begin position="1"/>
        <end position="635"/>
    </location>
</feature>
<feature type="region of interest" description="A; substrate-binding" evidence="1">
    <location>
        <begin position="1"/>
        <end position="346"/>
    </location>
</feature>
<feature type="region of interest" description="B" evidence="1">
    <location>
        <begin position="347"/>
        <end position="563"/>
    </location>
</feature>
<feature type="region of interest" description="C" evidence="1">
    <location>
        <begin position="564"/>
        <end position="635"/>
    </location>
</feature>
<comment type="function">
    <text evidence="1">Molecular chaperone. Has ATPase activity.</text>
</comment>
<comment type="subunit">
    <text evidence="1">Homodimer.</text>
</comment>
<comment type="subcellular location">
    <subcellularLocation>
        <location evidence="1">Cytoplasm</location>
    </subcellularLocation>
</comment>
<comment type="similarity">
    <text evidence="1">Belongs to the heat shock protein 90 family.</text>
</comment>
<protein>
    <recommendedName>
        <fullName evidence="1">Chaperone protein HtpG</fullName>
    </recommendedName>
    <alternativeName>
        <fullName evidence="1">Heat shock protein HtpG</fullName>
    </alternativeName>
    <alternativeName>
        <fullName evidence="1">High temperature protein G</fullName>
    </alternativeName>
</protein>
<name>HTPG_BORPE</name>
<reference key="1">
    <citation type="journal article" date="2003" name="Nat. Genet.">
        <title>Comparative analysis of the genome sequences of Bordetella pertussis, Bordetella parapertussis and Bordetella bronchiseptica.</title>
        <authorList>
            <person name="Parkhill J."/>
            <person name="Sebaihia M."/>
            <person name="Preston A."/>
            <person name="Murphy L.D."/>
            <person name="Thomson N.R."/>
            <person name="Harris D.E."/>
            <person name="Holden M.T.G."/>
            <person name="Churcher C.M."/>
            <person name="Bentley S.D."/>
            <person name="Mungall K.L."/>
            <person name="Cerdeno-Tarraga A.-M."/>
            <person name="Temple L."/>
            <person name="James K.D."/>
            <person name="Harris B."/>
            <person name="Quail M.A."/>
            <person name="Achtman M."/>
            <person name="Atkin R."/>
            <person name="Baker S."/>
            <person name="Basham D."/>
            <person name="Bason N."/>
            <person name="Cherevach I."/>
            <person name="Chillingworth T."/>
            <person name="Collins M."/>
            <person name="Cronin A."/>
            <person name="Davis P."/>
            <person name="Doggett J."/>
            <person name="Feltwell T."/>
            <person name="Goble A."/>
            <person name="Hamlin N."/>
            <person name="Hauser H."/>
            <person name="Holroyd S."/>
            <person name="Jagels K."/>
            <person name="Leather S."/>
            <person name="Moule S."/>
            <person name="Norberczak H."/>
            <person name="O'Neil S."/>
            <person name="Ormond D."/>
            <person name="Price C."/>
            <person name="Rabbinowitsch E."/>
            <person name="Rutter S."/>
            <person name="Sanders M."/>
            <person name="Saunders D."/>
            <person name="Seeger K."/>
            <person name="Sharp S."/>
            <person name="Simmonds M."/>
            <person name="Skelton J."/>
            <person name="Squares R."/>
            <person name="Squares S."/>
            <person name="Stevens K."/>
            <person name="Unwin L."/>
            <person name="Whitehead S."/>
            <person name="Barrell B.G."/>
            <person name="Maskell D.J."/>
        </authorList>
    </citation>
    <scope>NUCLEOTIDE SEQUENCE [LARGE SCALE GENOMIC DNA]</scope>
    <source>
        <strain>Tohama I / ATCC BAA-589 / NCTC 13251</strain>
    </source>
</reference>
<gene>
    <name evidence="1" type="primary">htpG</name>
    <name type="ordered locus">BP0074</name>
</gene>
<accession>Q7W0M8</accession>
<keyword id="KW-0067">ATP-binding</keyword>
<keyword id="KW-0143">Chaperone</keyword>
<keyword id="KW-0963">Cytoplasm</keyword>
<keyword id="KW-0547">Nucleotide-binding</keyword>
<keyword id="KW-1185">Reference proteome</keyword>
<keyword id="KW-0346">Stress response</keyword>
<organism>
    <name type="scientific">Bordetella pertussis (strain Tohama I / ATCC BAA-589 / NCTC 13251)</name>
    <dbReference type="NCBI Taxonomy" id="257313"/>
    <lineage>
        <taxon>Bacteria</taxon>
        <taxon>Pseudomonadati</taxon>
        <taxon>Pseudomonadota</taxon>
        <taxon>Betaproteobacteria</taxon>
        <taxon>Burkholderiales</taxon>
        <taxon>Alcaligenaceae</taxon>
        <taxon>Bordetella</taxon>
    </lineage>
</organism>
<dbReference type="EMBL" id="BX640411">
    <property type="protein sequence ID" value="CAE40453.1"/>
    <property type="molecule type" value="Genomic_DNA"/>
</dbReference>
<dbReference type="RefSeq" id="NP_878979.1">
    <property type="nucleotide sequence ID" value="NC_002929.2"/>
</dbReference>
<dbReference type="RefSeq" id="WP_010929604.1">
    <property type="nucleotide sequence ID" value="NZ_CP039022.1"/>
</dbReference>
<dbReference type="SMR" id="Q7W0M8"/>
<dbReference type="STRING" id="257313.BP0074"/>
<dbReference type="PaxDb" id="257313-BP0074"/>
<dbReference type="GeneID" id="69603666"/>
<dbReference type="KEGG" id="bpe:BP0074"/>
<dbReference type="PATRIC" id="fig|257313.5.peg.73"/>
<dbReference type="eggNOG" id="COG0326">
    <property type="taxonomic scope" value="Bacteria"/>
</dbReference>
<dbReference type="HOGENOM" id="CLU_006684_3_0_4"/>
<dbReference type="Proteomes" id="UP000002676">
    <property type="component" value="Chromosome"/>
</dbReference>
<dbReference type="GO" id="GO:0005737">
    <property type="term" value="C:cytoplasm"/>
    <property type="evidence" value="ECO:0007669"/>
    <property type="project" value="UniProtKB-SubCell"/>
</dbReference>
<dbReference type="GO" id="GO:0005524">
    <property type="term" value="F:ATP binding"/>
    <property type="evidence" value="ECO:0007669"/>
    <property type="project" value="UniProtKB-UniRule"/>
</dbReference>
<dbReference type="GO" id="GO:0016887">
    <property type="term" value="F:ATP hydrolysis activity"/>
    <property type="evidence" value="ECO:0007669"/>
    <property type="project" value="InterPro"/>
</dbReference>
<dbReference type="GO" id="GO:0140662">
    <property type="term" value="F:ATP-dependent protein folding chaperone"/>
    <property type="evidence" value="ECO:0007669"/>
    <property type="project" value="InterPro"/>
</dbReference>
<dbReference type="GO" id="GO:0051082">
    <property type="term" value="F:unfolded protein binding"/>
    <property type="evidence" value="ECO:0007669"/>
    <property type="project" value="UniProtKB-UniRule"/>
</dbReference>
<dbReference type="CDD" id="cd16927">
    <property type="entry name" value="HATPase_Hsp90-like"/>
    <property type="match status" value="1"/>
</dbReference>
<dbReference type="FunFam" id="3.30.230.80:FF:000002">
    <property type="entry name" value="Molecular chaperone HtpG"/>
    <property type="match status" value="1"/>
</dbReference>
<dbReference type="FunFam" id="3.30.565.10:FF:000009">
    <property type="entry name" value="Molecular chaperone HtpG"/>
    <property type="match status" value="1"/>
</dbReference>
<dbReference type="Gene3D" id="3.30.230.80">
    <property type="match status" value="1"/>
</dbReference>
<dbReference type="Gene3D" id="3.40.50.11260">
    <property type="match status" value="1"/>
</dbReference>
<dbReference type="Gene3D" id="1.20.120.790">
    <property type="entry name" value="Heat shock protein 90, C-terminal domain"/>
    <property type="match status" value="1"/>
</dbReference>
<dbReference type="Gene3D" id="3.30.565.10">
    <property type="entry name" value="Histidine kinase-like ATPase, C-terminal domain"/>
    <property type="match status" value="1"/>
</dbReference>
<dbReference type="HAMAP" id="MF_00505">
    <property type="entry name" value="HSP90"/>
    <property type="match status" value="1"/>
</dbReference>
<dbReference type="InterPro" id="IPR036890">
    <property type="entry name" value="HATPase_C_sf"/>
</dbReference>
<dbReference type="InterPro" id="IPR019805">
    <property type="entry name" value="Heat_shock_protein_90_CS"/>
</dbReference>
<dbReference type="InterPro" id="IPR037196">
    <property type="entry name" value="HSP90_C"/>
</dbReference>
<dbReference type="InterPro" id="IPR001404">
    <property type="entry name" value="Hsp90_fam"/>
</dbReference>
<dbReference type="InterPro" id="IPR020575">
    <property type="entry name" value="Hsp90_N"/>
</dbReference>
<dbReference type="InterPro" id="IPR020568">
    <property type="entry name" value="Ribosomal_Su5_D2-typ_SF"/>
</dbReference>
<dbReference type="NCBIfam" id="NF003555">
    <property type="entry name" value="PRK05218.1"/>
    <property type="match status" value="1"/>
</dbReference>
<dbReference type="PANTHER" id="PTHR11528">
    <property type="entry name" value="HEAT SHOCK PROTEIN 90 FAMILY MEMBER"/>
    <property type="match status" value="1"/>
</dbReference>
<dbReference type="Pfam" id="PF13589">
    <property type="entry name" value="HATPase_c_3"/>
    <property type="match status" value="1"/>
</dbReference>
<dbReference type="Pfam" id="PF00183">
    <property type="entry name" value="HSP90"/>
    <property type="match status" value="1"/>
</dbReference>
<dbReference type="PIRSF" id="PIRSF002583">
    <property type="entry name" value="Hsp90"/>
    <property type="match status" value="1"/>
</dbReference>
<dbReference type="PRINTS" id="PR00775">
    <property type="entry name" value="HEATSHOCK90"/>
</dbReference>
<dbReference type="SMART" id="SM00387">
    <property type="entry name" value="HATPase_c"/>
    <property type="match status" value="1"/>
</dbReference>
<dbReference type="SUPFAM" id="SSF55874">
    <property type="entry name" value="ATPase domain of HSP90 chaperone/DNA topoisomerase II/histidine kinase"/>
    <property type="match status" value="1"/>
</dbReference>
<dbReference type="SUPFAM" id="SSF110942">
    <property type="entry name" value="HSP90 C-terminal domain"/>
    <property type="match status" value="1"/>
</dbReference>
<dbReference type="SUPFAM" id="SSF54211">
    <property type="entry name" value="Ribosomal protein S5 domain 2-like"/>
    <property type="match status" value="1"/>
</dbReference>
<dbReference type="PROSITE" id="PS00298">
    <property type="entry name" value="HSP90"/>
    <property type="match status" value="1"/>
</dbReference>
<proteinExistence type="inferred from homology"/>
<sequence>MSQTTTTSASETLGFQAEVKQLLHLMIHSLYSNKEIFLRELVSNASDACDKLRFEAIDQPGLLEGDGELAIRVGYDKAARTITISDNGIGLSRDEAVANLGTIARSGTREFFSQLTGDKQKDAQLIGQFGVGFYSSFIVADKVTVLSRRAGLAANEAIRWESDGQGEFSIAPAEKAGRGTDVVLHLRADEDELLNGWKLREILRRYSDHISLPIRMAKEDWDAEKGEQVKGDELETVNQANALWTRNKSDITDEQYREFYKTVSHDYDDPLAWTHNRVEGRSEYTQLLYVPKHAPFDLWDRDARRGVKLYVKRVFIMDDAEQLLPSYLRFVRGVIDSADLPLNVSREILQESRDVRAIREGSAKRVLSLLEDMAENKAEDYATFWTEFGQVLKEGTGEDAANRERIARLLRFASTHDGEQAQTVSFADYVGRMKDGQDKIYYVTADTFTAAANSPHLEIFRKKGIEVLLLSDRVDEWMLSYLREFDGKSLVSVAKGGLDLAELADEEEKKRQSEVAETFKPLVERLQQALAEQVKEVRVTQRLVDSPACVVVGQNELSPHLLRMLKAAGQEAPEVKPVLEINPDHALVARIRDASDAEFGDWAALLLDQALLAEGAQIADPAAFVKRLNGLLLKA</sequence>
<evidence type="ECO:0000255" key="1">
    <source>
        <dbReference type="HAMAP-Rule" id="MF_00505"/>
    </source>
</evidence>